<evidence type="ECO:0000255" key="1">
    <source>
        <dbReference type="HAMAP-Rule" id="MF_00639"/>
    </source>
</evidence>
<dbReference type="EC" id="6.3.2.9" evidence="1"/>
<dbReference type="EMBL" id="CP000243">
    <property type="protein sequence ID" value="ABE05607.1"/>
    <property type="molecule type" value="Genomic_DNA"/>
</dbReference>
<dbReference type="RefSeq" id="WP_000796460.1">
    <property type="nucleotide sequence ID" value="NZ_CP064825.1"/>
</dbReference>
<dbReference type="SMR" id="Q1RGA7"/>
<dbReference type="KEGG" id="eci:UTI89_C0097"/>
<dbReference type="HOGENOM" id="CLU_032540_1_0_6"/>
<dbReference type="UniPathway" id="UPA00219"/>
<dbReference type="Proteomes" id="UP000001952">
    <property type="component" value="Chromosome"/>
</dbReference>
<dbReference type="GO" id="GO:0005737">
    <property type="term" value="C:cytoplasm"/>
    <property type="evidence" value="ECO:0007669"/>
    <property type="project" value="UniProtKB-SubCell"/>
</dbReference>
<dbReference type="GO" id="GO:0005524">
    <property type="term" value="F:ATP binding"/>
    <property type="evidence" value="ECO:0007669"/>
    <property type="project" value="UniProtKB-UniRule"/>
</dbReference>
<dbReference type="GO" id="GO:0008764">
    <property type="term" value="F:UDP-N-acetylmuramoylalanine-D-glutamate ligase activity"/>
    <property type="evidence" value="ECO:0007669"/>
    <property type="project" value="UniProtKB-UniRule"/>
</dbReference>
<dbReference type="GO" id="GO:0051301">
    <property type="term" value="P:cell division"/>
    <property type="evidence" value="ECO:0007669"/>
    <property type="project" value="UniProtKB-KW"/>
</dbReference>
<dbReference type="GO" id="GO:0071555">
    <property type="term" value="P:cell wall organization"/>
    <property type="evidence" value="ECO:0007669"/>
    <property type="project" value="UniProtKB-KW"/>
</dbReference>
<dbReference type="GO" id="GO:0009252">
    <property type="term" value="P:peptidoglycan biosynthetic process"/>
    <property type="evidence" value="ECO:0007669"/>
    <property type="project" value="UniProtKB-UniRule"/>
</dbReference>
<dbReference type="GO" id="GO:0008360">
    <property type="term" value="P:regulation of cell shape"/>
    <property type="evidence" value="ECO:0007669"/>
    <property type="project" value="UniProtKB-KW"/>
</dbReference>
<dbReference type="FunFam" id="3.40.1190.10:FF:000002">
    <property type="entry name" value="UDP-N-acetylmuramoylalanine--D-glutamate ligase"/>
    <property type="match status" value="1"/>
</dbReference>
<dbReference type="FunFam" id="3.40.50.720:FF:000126">
    <property type="entry name" value="UDP-N-acetylmuramoylalanine--D-glutamate ligase"/>
    <property type="match status" value="1"/>
</dbReference>
<dbReference type="FunFam" id="3.90.190.20:FF:000003">
    <property type="entry name" value="UDP-N-acetylmuramoylalanine--D-glutamate ligase"/>
    <property type="match status" value="1"/>
</dbReference>
<dbReference type="Gene3D" id="3.90.190.20">
    <property type="entry name" value="Mur ligase, C-terminal domain"/>
    <property type="match status" value="1"/>
</dbReference>
<dbReference type="Gene3D" id="3.40.1190.10">
    <property type="entry name" value="Mur-like, catalytic domain"/>
    <property type="match status" value="1"/>
</dbReference>
<dbReference type="Gene3D" id="3.40.50.720">
    <property type="entry name" value="NAD(P)-binding Rossmann-like Domain"/>
    <property type="match status" value="1"/>
</dbReference>
<dbReference type="HAMAP" id="MF_00639">
    <property type="entry name" value="MurD"/>
    <property type="match status" value="1"/>
</dbReference>
<dbReference type="InterPro" id="IPR036565">
    <property type="entry name" value="Mur-like_cat_sf"/>
</dbReference>
<dbReference type="InterPro" id="IPR004101">
    <property type="entry name" value="Mur_ligase_C"/>
</dbReference>
<dbReference type="InterPro" id="IPR036615">
    <property type="entry name" value="Mur_ligase_C_dom_sf"/>
</dbReference>
<dbReference type="InterPro" id="IPR013221">
    <property type="entry name" value="Mur_ligase_cen"/>
</dbReference>
<dbReference type="InterPro" id="IPR005762">
    <property type="entry name" value="MurD"/>
</dbReference>
<dbReference type="NCBIfam" id="TIGR01087">
    <property type="entry name" value="murD"/>
    <property type="match status" value="1"/>
</dbReference>
<dbReference type="PANTHER" id="PTHR43692">
    <property type="entry name" value="UDP-N-ACETYLMURAMOYLALANINE--D-GLUTAMATE LIGASE"/>
    <property type="match status" value="1"/>
</dbReference>
<dbReference type="PANTHER" id="PTHR43692:SF1">
    <property type="entry name" value="UDP-N-ACETYLMURAMOYLALANINE--D-GLUTAMATE LIGASE"/>
    <property type="match status" value="1"/>
</dbReference>
<dbReference type="Pfam" id="PF02875">
    <property type="entry name" value="Mur_ligase_C"/>
    <property type="match status" value="1"/>
</dbReference>
<dbReference type="Pfam" id="PF08245">
    <property type="entry name" value="Mur_ligase_M"/>
    <property type="match status" value="1"/>
</dbReference>
<dbReference type="Pfam" id="PF21799">
    <property type="entry name" value="MurD-like_N"/>
    <property type="match status" value="1"/>
</dbReference>
<dbReference type="SUPFAM" id="SSF51984">
    <property type="entry name" value="MurCD N-terminal domain"/>
    <property type="match status" value="1"/>
</dbReference>
<dbReference type="SUPFAM" id="SSF53623">
    <property type="entry name" value="MurD-like peptide ligases, catalytic domain"/>
    <property type="match status" value="1"/>
</dbReference>
<dbReference type="SUPFAM" id="SSF53244">
    <property type="entry name" value="MurD-like peptide ligases, peptide-binding domain"/>
    <property type="match status" value="1"/>
</dbReference>
<gene>
    <name evidence="1" type="primary">murD</name>
    <name type="ordered locus">UTI89_C0097</name>
</gene>
<protein>
    <recommendedName>
        <fullName evidence="1">UDP-N-acetylmuramoylalanine--D-glutamate ligase</fullName>
        <ecNumber evidence="1">6.3.2.9</ecNumber>
    </recommendedName>
    <alternativeName>
        <fullName evidence="1">D-glutamic acid-adding enzyme</fullName>
    </alternativeName>
    <alternativeName>
        <fullName evidence="1">UDP-N-acetylmuramoyl-L-alanyl-D-glutamate synthetase</fullName>
    </alternativeName>
</protein>
<comment type="function">
    <text evidence="1">Cell wall formation. Catalyzes the addition of glutamate to the nucleotide precursor UDP-N-acetylmuramoyl-L-alanine (UMA).</text>
</comment>
<comment type="catalytic activity">
    <reaction evidence="1">
        <text>UDP-N-acetyl-alpha-D-muramoyl-L-alanine + D-glutamate + ATP = UDP-N-acetyl-alpha-D-muramoyl-L-alanyl-D-glutamate + ADP + phosphate + H(+)</text>
        <dbReference type="Rhea" id="RHEA:16429"/>
        <dbReference type="ChEBI" id="CHEBI:15378"/>
        <dbReference type="ChEBI" id="CHEBI:29986"/>
        <dbReference type="ChEBI" id="CHEBI:30616"/>
        <dbReference type="ChEBI" id="CHEBI:43474"/>
        <dbReference type="ChEBI" id="CHEBI:83898"/>
        <dbReference type="ChEBI" id="CHEBI:83900"/>
        <dbReference type="ChEBI" id="CHEBI:456216"/>
        <dbReference type="EC" id="6.3.2.9"/>
    </reaction>
</comment>
<comment type="pathway">
    <text evidence="1">Cell wall biogenesis; peptidoglycan biosynthesis.</text>
</comment>
<comment type="subcellular location">
    <subcellularLocation>
        <location evidence="1">Cytoplasm</location>
    </subcellularLocation>
</comment>
<comment type="similarity">
    <text evidence="1">Belongs to the MurCDEF family.</text>
</comment>
<sequence>MADYQGKNVVIIGLGLTGLSCVDFFLARGVTPRVMDTRMTPPGLDKLPEAVERHTGGLNDEWLMAADLIVASPGIALAHPSLSAAADAGIEIVGDIELFCREAQAPIVAITGSNGKSTVTTLVGEMAKAAGVNVGVGGNIGLPALMLLDDECELYVLELSSFQLETTSSLQAVAATILNVTEDHMDRYPFGLQQYRAAKLRIYENAKVCVVNADDALTMPIRGADERCVSFGVNMGDYHLNHQQGETWLRVKGEKVLNVKEMKLSGQHNYTNALAALALADAAGLPRASSLKALTTFTGLPHRFEVVLEHNGVRWVNDSKATNVGSTEAALNGLHVDGTLHLLLGGDGKSADFSPLARYLNGDNVRLYCFGRDGAQLAALRPEVAEQTETMEQAMRLLAPRVQPGDMVLLSPACASLDQFKNFEQRGNEFARLAKELG</sequence>
<organism>
    <name type="scientific">Escherichia coli (strain UTI89 / UPEC)</name>
    <dbReference type="NCBI Taxonomy" id="364106"/>
    <lineage>
        <taxon>Bacteria</taxon>
        <taxon>Pseudomonadati</taxon>
        <taxon>Pseudomonadota</taxon>
        <taxon>Gammaproteobacteria</taxon>
        <taxon>Enterobacterales</taxon>
        <taxon>Enterobacteriaceae</taxon>
        <taxon>Escherichia</taxon>
    </lineage>
</organism>
<reference key="1">
    <citation type="journal article" date="2006" name="Proc. Natl. Acad. Sci. U.S.A.">
        <title>Identification of genes subject to positive selection in uropathogenic strains of Escherichia coli: a comparative genomics approach.</title>
        <authorList>
            <person name="Chen S.L."/>
            <person name="Hung C.-S."/>
            <person name="Xu J."/>
            <person name="Reigstad C.S."/>
            <person name="Magrini V."/>
            <person name="Sabo A."/>
            <person name="Blasiar D."/>
            <person name="Bieri T."/>
            <person name="Meyer R.R."/>
            <person name="Ozersky P."/>
            <person name="Armstrong J.R."/>
            <person name="Fulton R.S."/>
            <person name="Latreille J.P."/>
            <person name="Spieth J."/>
            <person name="Hooton T.M."/>
            <person name="Mardis E.R."/>
            <person name="Hultgren S.J."/>
            <person name="Gordon J.I."/>
        </authorList>
    </citation>
    <scope>NUCLEOTIDE SEQUENCE [LARGE SCALE GENOMIC DNA]</scope>
    <source>
        <strain>UTI89 / UPEC</strain>
    </source>
</reference>
<name>MURD_ECOUT</name>
<feature type="chain" id="PRO_0000257188" description="UDP-N-acetylmuramoylalanine--D-glutamate ligase">
    <location>
        <begin position="1"/>
        <end position="438"/>
    </location>
</feature>
<feature type="binding site" evidence="1">
    <location>
        <begin position="112"/>
        <end position="118"/>
    </location>
    <ligand>
        <name>ATP</name>
        <dbReference type="ChEBI" id="CHEBI:30616"/>
    </ligand>
</feature>
<proteinExistence type="inferred from homology"/>
<accession>Q1RGA7</accession>
<keyword id="KW-0067">ATP-binding</keyword>
<keyword id="KW-0131">Cell cycle</keyword>
<keyword id="KW-0132">Cell division</keyword>
<keyword id="KW-0133">Cell shape</keyword>
<keyword id="KW-0961">Cell wall biogenesis/degradation</keyword>
<keyword id="KW-0963">Cytoplasm</keyword>
<keyword id="KW-0436">Ligase</keyword>
<keyword id="KW-0547">Nucleotide-binding</keyword>
<keyword id="KW-0573">Peptidoglycan synthesis</keyword>